<proteinExistence type="inferred from homology"/>
<name>LDH_STRT1</name>
<evidence type="ECO:0000255" key="1">
    <source>
        <dbReference type="HAMAP-Rule" id="MF_00488"/>
    </source>
</evidence>
<gene>
    <name evidence="1" type="primary">ldh</name>
    <name type="ordered locus">str1280</name>
</gene>
<protein>
    <recommendedName>
        <fullName evidence="1">L-lactate dehydrogenase</fullName>
        <shortName evidence="1">L-LDH</shortName>
        <ecNumber evidence="1">1.1.1.27</ecNumber>
    </recommendedName>
</protein>
<comment type="function">
    <text evidence="1">Catalyzes the conversion of lactate to pyruvate.</text>
</comment>
<comment type="catalytic activity">
    <reaction evidence="1">
        <text>(S)-lactate + NAD(+) = pyruvate + NADH + H(+)</text>
        <dbReference type="Rhea" id="RHEA:23444"/>
        <dbReference type="ChEBI" id="CHEBI:15361"/>
        <dbReference type="ChEBI" id="CHEBI:15378"/>
        <dbReference type="ChEBI" id="CHEBI:16651"/>
        <dbReference type="ChEBI" id="CHEBI:57540"/>
        <dbReference type="ChEBI" id="CHEBI:57945"/>
        <dbReference type="EC" id="1.1.1.27"/>
    </reaction>
</comment>
<comment type="activity regulation">
    <text evidence="1">Allosterically activated by fructose 1,6-bisphosphate (FBP).</text>
</comment>
<comment type="pathway">
    <text evidence="1">Fermentation; pyruvate fermentation to lactate; (S)-lactate from pyruvate: step 1/1.</text>
</comment>
<comment type="subunit">
    <text evidence="1">Homotetramer.</text>
</comment>
<comment type="subcellular location">
    <subcellularLocation>
        <location evidence="1">Cytoplasm</location>
    </subcellularLocation>
</comment>
<comment type="similarity">
    <text evidence="1">Belongs to the LDH/MDH superfamily. LDH family.</text>
</comment>
<reference key="1">
    <citation type="journal article" date="2004" name="Nat. Biotechnol.">
        <title>Complete sequence and comparative genome analysis of the dairy bacterium Streptococcus thermophilus.</title>
        <authorList>
            <person name="Bolotin A."/>
            <person name="Quinquis B."/>
            <person name="Renault P."/>
            <person name="Sorokin A."/>
            <person name="Ehrlich S.D."/>
            <person name="Kulakauskas S."/>
            <person name="Lapidus A."/>
            <person name="Goltsman E."/>
            <person name="Mazur M."/>
            <person name="Pusch G.D."/>
            <person name="Fonstein M."/>
            <person name="Overbeek R."/>
            <person name="Kyprides N."/>
            <person name="Purnelle B."/>
            <person name="Prozzi D."/>
            <person name="Ngui K."/>
            <person name="Masuy D."/>
            <person name="Hancy F."/>
            <person name="Burteau S."/>
            <person name="Boutry M."/>
            <person name="Delcour J."/>
            <person name="Goffeau A."/>
            <person name="Hols P."/>
        </authorList>
    </citation>
    <scope>NUCLEOTIDE SEQUENCE [LARGE SCALE GENOMIC DNA]</scope>
    <source>
        <strain>CNRZ 1066</strain>
    </source>
</reference>
<dbReference type="EC" id="1.1.1.27" evidence="1"/>
<dbReference type="EMBL" id="CP000024">
    <property type="protein sequence ID" value="AAV62824.1"/>
    <property type="molecule type" value="Genomic_DNA"/>
</dbReference>
<dbReference type="RefSeq" id="WP_011227325.1">
    <property type="nucleotide sequence ID" value="NC_006449.1"/>
</dbReference>
<dbReference type="SMR" id="Q5LZ83"/>
<dbReference type="KEGG" id="stc:str1280"/>
<dbReference type="HOGENOM" id="CLU_045401_1_1_9"/>
<dbReference type="UniPathway" id="UPA00554">
    <property type="reaction ID" value="UER00611"/>
</dbReference>
<dbReference type="GO" id="GO:0005737">
    <property type="term" value="C:cytoplasm"/>
    <property type="evidence" value="ECO:0007669"/>
    <property type="project" value="UniProtKB-SubCell"/>
</dbReference>
<dbReference type="GO" id="GO:0004459">
    <property type="term" value="F:L-lactate dehydrogenase activity"/>
    <property type="evidence" value="ECO:0007669"/>
    <property type="project" value="UniProtKB-UniRule"/>
</dbReference>
<dbReference type="GO" id="GO:0006096">
    <property type="term" value="P:glycolytic process"/>
    <property type="evidence" value="ECO:0007669"/>
    <property type="project" value="UniProtKB-UniRule"/>
</dbReference>
<dbReference type="GO" id="GO:0006089">
    <property type="term" value="P:lactate metabolic process"/>
    <property type="evidence" value="ECO:0007669"/>
    <property type="project" value="TreeGrafter"/>
</dbReference>
<dbReference type="CDD" id="cd05291">
    <property type="entry name" value="HicDH_like"/>
    <property type="match status" value="1"/>
</dbReference>
<dbReference type="FunFam" id="3.40.50.720:FF:000018">
    <property type="entry name" value="Malate dehydrogenase"/>
    <property type="match status" value="1"/>
</dbReference>
<dbReference type="Gene3D" id="3.90.110.10">
    <property type="entry name" value="Lactate dehydrogenase/glycoside hydrolase, family 4, C-terminal"/>
    <property type="match status" value="1"/>
</dbReference>
<dbReference type="Gene3D" id="3.40.50.720">
    <property type="entry name" value="NAD(P)-binding Rossmann-like Domain"/>
    <property type="match status" value="1"/>
</dbReference>
<dbReference type="HAMAP" id="MF_00488">
    <property type="entry name" value="Lactate_dehydrog"/>
    <property type="match status" value="1"/>
</dbReference>
<dbReference type="InterPro" id="IPR001557">
    <property type="entry name" value="L-lactate/malate_DH"/>
</dbReference>
<dbReference type="InterPro" id="IPR011304">
    <property type="entry name" value="L-lactate_DH"/>
</dbReference>
<dbReference type="InterPro" id="IPR018177">
    <property type="entry name" value="L-lactate_DH_AS"/>
</dbReference>
<dbReference type="InterPro" id="IPR022383">
    <property type="entry name" value="Lactate/malate_DH_C"/>
</dbReference>
<dbReference type="InterPro" id="IPR001236">
    <property type="entry name" value="Lactate/malate_DH_N"/>
</dbReference>
<dbReference type="InterPro" id="IPR015955">
    <property type="entry name" value="Lactate_DH/Glyco_Ohase_4_C"/>
</dbReference>
<dbReference type="InterPro" id="IPR036291">
    <property type="entry name" value="NAD(P)-bd_dom_sf"/>
</dbReference>
<dbReference type="NCBIfam" id="TIGR01771">
    <property type="entry name" value="L-LDH-NAD"/>
    <property type="match status" value="1"/>
</dbReference>
<dbReference type="NCBIfam" id="NF000824">
    <property type="entry name" value="PRK00066.1"/>
    <property type="match status" value="1"/>
</dbReference>
<dbReference type="PANTHER" id="PTHR43128">
    <property type="entry name" value="L-2-HYDROXYCARBOXYLATE DEHYDROGENASE (NAD(P)(+))"/>
    <property type="match status" value="1"/>
</dbReference>
<dbReference type="PANTHER" id="PTHR43128:SF16">
    <property type="entry name" value="L-LACTATE DEHYDROGENASE"/>
    <property type="match status" value="1"/>
</dbReference>
<dbReference type="Pfam" id="PF02866">
    <property type="entry name" value="Ldh_1_C"/>
    <property type="match status" value="1"/>
</dbReference>
<dbReference type="Pfam" id="PF00056">
    <property type="entry name" value="Ldh_1_N"/>
    <property type="match status" value="1"/>
</dbReference>
<dbReference type="PIRSF" id="PIRSF000102">
    <property type="entry name" value="Lac_mal_DH"/>
    <property type="match status" value="1"/>
</dbReference>
<dbReference type="PRINTS" id="PR00086">
    <property type="entry name" value="LLDHDRGNASE"/>
</dbReference>
<dbReference type="SUPFAM" id="SSF56327">
    <property type="entry name" value="LDH C-terminal domain-like"/>
    <property type="match status" value="1"/>
</dbReference>
<dbReference type="SUPFAM" id="SSF51735">
    <property type="entry name" value="NAD(P)-binding Rossmann-fold domains"/>
    <property type="match status" value="1"/>
</dbReference>
<dbReference type="PROSITE" id="PS00064">
    <property type="entry name" value="L_LDH"/>
    <property type="match status" value="1"/>
</dbReference>
<feature type="chain" id="PRO_0000237566" description="L-lactate dehydrogenase">
    <location>
        <begin position="1"/>
        <end position="328"/>
    </location>
</feature>
<feature type="active site" description="Proton acceptor" evidence="1">
    <location>
        <position position="181"/>
    </location>
</feature>
<feature type="binding site" evidence="1">
    <location>
        <position position="18"/>
    </location>
    <ligand>
        <name>NAD(+)</name>
        <dbReference type="ChEBI" id="CHEBI:57540"/>
    </ligand>
</feature>
<feature type="binding site" evidence="1">
    <location>
        <position position="39"/>
    </location>
    <ligand>
        <name>NAD(+)</name>
        <dbReference type="ChEBI" id="CHEBI:57540"/>
    </ligand>
</feature>
<feature type="binding site" evidence="1">
    <location>
        <position position="46"/>
    </location>
    <ligand>
        <name>NAD(+)</name>
        <dbReference type="ChEBI" id="CHEBI:57540"/>
    </ligand>
</feature>
<feature type="binding site" evidence="1">
    <location>
        <position position="71"/>
    </location>
    <ligand>
        <name>NAD(+)</name>
        <dbReference type="ChEBI" id="CHEBI:57540"/>
    </ligand>
</feature>
<feature type="binding site" evidence="1">
    <location>
        <begin position="85"/>
        <end position="86"/>
    </location>
    <ligand>
        <name>NAD(+)</name>
        <dbReference type="ChEBI" id="CHEBI:57540"/>
    </ligand>
</feature>
<feature type="binding site" evidence="1">
    <location>
        <position position="88"/>
    </location>
    <ligand>
        <name>substrate</name>
    </ligand>
</feature>
<feature type="binding site" evidence="1">
    <location>
        <position position="94"/>
    </location>
    <ligand>
        <name>substrate</name>
    </ligand>
</feature>
<feature type="binding site" evidence="1">
    <location>
        <position position="107"/>
    </location>
    <ligand>
        <name>NAD(+)</name>
        <dbReference type="ChEBI" id="CHEBI:57540"/>
    </ligand>
</feature>
<feature type="binding site" evidence="1">
    <location>
        <begin position="124"/>
        <end position="126"/>
    </location>
    <ligand>
        <name>NAD(+)</name>
        <dbReference type="ChEBI" id="CHEBI:57540"/>
    </ligand>
</feature>
<feature type="binding site" evidence="1">
    <location>
        <begin position="126"/>
        <end position="129"/>
    </location>
    <ligand>
        <name>substrate</name>
    </ligand>
</feature>
<feature type="binding site" evidence="1">
    <location>
        <position position="149"/>
    </location>
    <ligand>
        <name>NAD(+)</name>
        <dbReference type="ChEBI" id="CHEBI:57540"/>
    </ligand>
</feature>
<feature type="binding site" evidence="1">
    <location>
        <begin position="154"/>
        <end position="157"/>
    </location>
    <ligand>
        <name>substrate</name>
    </ligand>
</feature>
<feature type="binding site" evidence="1">
    <location>
        <position position="159"/>
    </location>
    <ligand>
        <name>beta-D-fructose 1,6-bisphosphate</name>
        <dbReference type="ChEBI" id="CHEBI:32966"/>
        <note>allosteric activator</note>
    </ligand>
</feature>
<feature type="binding site" evidence="1">
    <location>
        <position position="174"/>
    </location>
    <ligand>
        <name>beta-D-fructose 1,6-bisphosphate</name>
        <dbReference type="ChEBI" id="CHEBI:32966"/>
        <note>allosteric activator</note>
    </ligand>
</feature>
<feature type="binding site" evidence="1">
    <location>
        <position position="235"/>
    </location>
    <ligand>
        <name>substrate</name>
    </ligand>
</feature>
<feature type="modified residue" description="Phosphotyrosine" evidence="1">
    <location>
        <position position="226"/>
    </location>
</feature>
<keyword id="KW-0021">Allosteric enzyme</keyword>
<keyword id="KW-0963">Cytoplasm</keyword>
<keyword id="KW-0520">NAD</keyword>
<keyword id="KW-0560">Oxidoreductase</keyword>
<keyword id="KW-0597">Phosphoprotein</keyword>
<accession>Q5LZ83</accession>
<organism>
    <name type="scientific">Streptococcus thermophilus (strain CNRZ 1066)</name>
    <dbReference type="NCBI Taxonomy" id="299768"/>
    <lineage>
        <taxon>Bacteria</taxon>
        <taxon>Bacillati</taxon>
        <taxon>Bacillota</taxon>
        <taxon>Bacilli</taxon>
        <taxon>Lactobacillales</taxon>
        <taxon>Streptococcaceae</taxon>
        <taxon>Streptococcus</taxon>
    </lineage>
</organism>
<sequence>MTATKLHKKVILVGDGAVGSSYAFALVNQGIAQELGIIEIPQLFEKAVGDALDLSHALPFTSPKKIYAAKYEDCADADLVVITAGAPQKPGETRLDLVGKNLAINKSIVTQVVESGFNGIFLVAANPVDVLTYSTWKFSGFPKERVIGSGTSLDSARFRQALAEKLNVDARSVHAYIMGEHGDSEFAVWSHANIAGVNLEEFLKDKENVQEAELVELFEGVRDAAYTIINKKGATYYGIAVALARITKAILDDENAVLPLSVFQEGQYGVNNIFIGQPAIVGAHGIVRPVNIPLNDAEQQKMKASADELQAIIDEAWKNPEFQEASKN</sequence>